<accession>C0RF98</accession>
<organism>
    <name type="scientific">Brucella melitensis biotype 2 (strain ATCC 23457)</name>
    <dbReference type="NCBI Taxonomy" id="546272"/>
    <lineage>
        <taxon>Bacteria</taxon>
        <taxon>Pseudomonadati</taxon>
        <taxon>Pseudomonadota</taxon>
        <taxon>Alphaproteobacteria</taxon>
        <taxon>Hyphomicrobiales</taxon>
        <taxon>Brucellaceae</taxon>
        <taxon>Brucella/Ochrobactrum group</taxon>
        <taxon>Brucella</taxon>
    </lineage>
</organism>
<gene>
    <name evidence="1" type="primary">rplU</name>
    <name type="ordered locus">BMEA_A1899</name>
</gene>
<name>RL21_BRUMB</name>
<protein>
    <recommendedName>
        <fullName evidence="1">Large ribosomal subunit protein bL21</fullName>
    </recommendedName>
    <alternativeName>
        <fullName evidence="3">50S ribosomal protein L21</fullName>
    </alternativeName>
</protein>
<keyword id="KW-0687">Ribonucleoprotein</keyword>
<keyword id="KW-0689">Ribosomal protein</keyword>
<keyword id="KW-0694">RNA-binding</keyword>
<keyword id="KW-0699">rRNA-binding</keyword>
<comment type="function">
    <text evidence="1">This protein binds to 23S rRNA in the presence of protein L20.</text>
</comment>
<comment type="subunit">
    <text evidence="1">Part of the 50S ribosomal subunit. Contacts protein L20.</text>
</comment>
<comment type="similarity">
    <text evidence="1">Belongs to the bacterial ribosomal protein bL21 family.</text>
</comment>
<sequence>MFAVIKTGGKQYRVAANDLIKVEKVAGEAGDIVEFAEVLMVGSTIGAPTVAGALVTAEVVEQGRGRKVIAFKKRRRQNSKRTRGHRQELTTIRISEILTDGAKPSKKAAEKKAPKADAAEGEAAKPKKAAPKKAAAKAESAE</sequence>
<proteinExistence type="inferred from homology"/>
<feature type="chain" id="PRO_1000166706" description="Large ribosomal subunit protein bL21">
    <location>
        <begin position="1"/>
        <end position="142"/>
    </location>
</feature>
<feature type="region of interest" description="Disordered" evidence="2">
    <location>
        <begin position="74"/>
        <end position="142"/>
    </location>
</feature>
<feature type="compositionally biased region" description="Basic residues" evidence="2">
    <location>
        <begin position="74"/>
        <end position="84"/>
    </location>
</feature>
<feature type="compositionally biased region" description="Basic and acidic residues" evidence="2">
    <location>
        <begin position="107"/>
        <end position="125"/>
    </location>
</feature>
<feature type="compositionally biased region" description="Basic residues" evidence="2">
    <location>
        <begin position="126"/>
        <end position="135"/>
    </location>
</feature>
<reference key="1">
    <citation type="submission" date="2009-03" db="EMBL/GenBank/DDBJ databases">
        <title>Brucella melitensis ATCC 23457 whole genome shotgun sequencing project.</title>
        <authorList>
            <person name="Setubal J.C."/>
            <person name="Boyle S."/>
            <person name="Crasta O.R."/>
            <person name="Gillespie J.J."/>
            <person name="Kenyon R.W."/>
            <person name="Lu J."/>
            <person name="Mane S."/>
            <person name="Nagrani S."/>
            <person name="Shallom J.M."/>
            <person name="Shallom S."/>
            <person name="Shukla M."/>
            <person name="Snyder E.E."/>
            <person name="Sobral B.W."/>
            <person name="Wattam A.R."/>
            <person name="Will R."/>
            <person name="Williams K."/>
            <person name="Yoo H."/>
            <person name="Munk C."/>
            <person name="Tapia R."/>
            <person name="Han C."/>
            <person name="Detter J.C."/>
            <person name="Bruce D."/>
            <person name="Brettin T.S."/>
        </authorList>
    </citation>
    <scope>NUCLEOTIDE SEQUENCE [LARGE SCALE GENOMIC DNA]</scope>
    <source>
        <strain>ATCC 23457</strain>
    </source>
</reference>
<evidence type="ECO:0000255" key="1">
    <source>
        <dbReference type="HAMAP-Rule" id="MF_01363"/>
    </source>
</evidence>
<evidence type="ECO:0000256" key="2">
    <source>
        <dbReference type="SAM" id="MobiDB-lite"/>
    </source>
</evidence>
<evidence type="ECO:0000305" key="3"/>
<dbReference type="EMBL" id="CP001488">
    <property type="protein sequence ID" value="ACO01570.1"/>
    <property type="molecule type" value="Genomic_DNA"/>
</dbReference>
<dbReference type="RefSeq" id="WP_002967949.1">
    <property type="nucleotide sequence ID" value="NC_012441.1"/>
</dbReference>
<dbReference type="SMR" id="C0RF98"/>
<dbReference type="GeneID" id="97533030"/>
<dbReference type="KEGG" id="bmi:BMEA_A1899"/>
<dbReference type="HOGENOM" id="CLU_061463_1_1_5"/>
<dbReference type="Proteomes" id="UP000001748">
    <property type="component" value="Chromosome I"/>
</dbReference>
<dbReference type="GO" id="GO:0005737">
    <property type="term" value="C:cytoplasm"/>
    <property type="evidence" value="ECO:0007669"/>
    <property type="project" value="UniProtKB-ARBA"/>
</dbReference>
<dbReference type="GO" id="GO:1990904">
    <property type="term" value="C:ribonucleoprotein complex"/>
    <property type="evidence" value="ECO:0007669"/>
    <property type="project" value="UniProtKB-KW"/>
</dbReference>
<dbReference type="GO" id="GO:0005840">
    <property type="term" value="C:ribosome"/>
    <property type="evidence" value="ECO:0007669"/>
    <property type="project" value="UniProtKB-KW"/>
</dbReference>
<dbReference type="GO" id="GO:0019843">
    <property type="term" value="F:rRNA binding"/>
    <property type="evidence" value="ECO:0007669"/>
    <property type="project" value="UniProtKB-UniRule"/>
</dbReference>
<dbReference type="GO" id="GO:0003735">
    <property type="term" value="F:structural constituent of ribosome"/>
    <property type="evidence" value="ECO:0007669"/>
    <property type="project" value="InterPro"/>
</dbReference>
<dbReference type="GO" id="GO:0006412">
    <property type="term" value="P:translation"/>
    <property type="evidence" value="ECO:0007669"/>
    <property type="project" value="UniProtKB-UniRule"/>
</dbReference>
<dbReference type="HAMAP" id="MF_01363">
    <property type="entry name" value="Ribosomal_bL21"/>
    <property type="match status" value="1"/>
</dbReference>
<dbReference type="InterPro" id="IPR028909">
    <property type="entry name" value="bL21-like"/>
</dbReference>
<dbReference type="InterPro" id="IPR036164">
    <property type="entry name" value="bL21-like_sf"/>
</dbReference>
<dbReference type="InterPro" id="IPR001787">
    <property type="entry name" value="Ribosomal_bL21"/>
</dbReference>
<dbReference type="NCBIfam" id="TIGR00061">
    <property type="entry name" value="L21"/>
    <property type="match status" value="1"/>
</dbReference>
<dbReference type="PANTHER" id="PTHR21349">
    <property type="entry name" value="50S RIBOSOMAL PROTEIN L21"/>
    <property type="match status" value="1"/>
</dbReference>
<dbReference type="PANTHER" id="PTHR21349:SF0">
    <property type="entry name" value="LARGE RIBOSOMAL SUBUNIT PROTEIN BL21M"/>
    <property type="match status" value="1"/>
</dbReference>
<dbReference type="Pfam" id="PF00829">
    <property type="entry name" value="Ribosomal_L21p"/>
    <property type="match status" value="1"/>
</dbReference>
<dbReference type="SUPFAM" id="SSF141091">
    <property type="entry name" value="L21p-like"/>
    <property type="match status" value="1"/>
</dbReference>